<gene>
    <name evidence="1" type="primary">fmt</name>
    <name type="ordered locus">SPP_1753</name>
</gene>
<organism>
    <name type="scientific">Streptococcus pneumoniae (strain P1031)</name>
    <dbReference type="NCBI Taxonomy" id="488223"/>
    <lineage>
        <taxon>Bacteria</taxon>
        <taxon>Bacillati</taxon>
        <taxon>Bacillota</taxon>
        <taxon>Bacilli</taxon>
        <taxon>Lactobacillales</taxon>
        <taxon>Streptococcaceae</taxon>
        <taxon>Streptococcus</taxon>
    </lineage>
</organism>
<sequence length="311" mass="34001">MTKLIFMGTPDFSATVLKGLLTDDRYEILAVVTQPDRAVGRKKVIQETPVKQAAKEAGLSIYQPEKLSGSPEMEELMKLGADGIVTAAFGQFLPSKLLDSMDFAVNVHASLLPRHRGGAPIHYALIQGDEEAGVTIMEMVKEMDAGDMISRRSIPITDEDNVGTLFEKLALVGRDLLLDTLPAYIAGDIKPEPQDTSQVTFSPNIKPEEEKLDWNKTNRQLFNQIRGMNPWPVAHTFLKGDRFKIYEALPVEGQGNPGEILSIGKKELIVATAEGALSLKQVQPAGKPKMDIASFLNGVGRTLTVGERFGD</sequence>
<proteinExistence type="inferred from homology"/>
<keyword id="KW-0648">Protein biosynthesis</keyword>
<keyword id="KW-0808">Transferase</keyword>
<accession>C1CM71</accession>
<feature type="chain" id="PRO_1000190046" description="Methionyl-tRNA formyltransferase">
    <location>
        <begin position="1"/>
        <end position="311"/>
    </location>
</feature>
<feature type="binding site" evidence="1">
    <location>
        <begin position="110"/>
        <end position="113"/>
    </location>
    <ligand>
        <name>(6S)-5,6,7,8-tetrahydrofolate</name>
        <dbReference type="ChEBI" id="CHEBI:57453"/>
    </ligand>
</feature>
<comment type="function">
    <text evidence="1">Attaches a formyl group to the free amino group of methionyl-tRNA(fMet). The formyl group appears to play a dual role in the initiator identity of N-formylmethionyl-tRNA by promoting its recognition by IF2 and preventing the misappropriation of this tRNA by the elongation apparatus.</text>
</comment>
<comment type="catalytic activity">
    <reaction evidence="1">
        <text>L-methionyl-tRNA(fMet) + (6R)-10-formyltetrahydrofolate = N-formyl-L-methionyl-tRNA(fMet) + (6S)-5,6,7,8-tetrahydrofolate + H(+)</text>
        <dbReference type="Rhea" id="RHEA:24380"/>
        <dbReference type="Rhea" id="RHEA-COMP:9952"/>
        <dbReference type="Rhea" id="RHEA-COMP:9953"/>
        <dbReference type="ChEBI" id="CHEBI:15378"/>
        <dbReference type="ChEBI" id="CHEBI:57453"/>
        <dbReference type="ChEBI" id="CHEBI:78530"/>
        <dbReference type="ChEBI" id="CHEBI:78844"/>
        <dbReference type="ChEBI" id="CHEBI:195366"/>
        <dbReference type="EC" id="2.1.2.9"/>
    </reaction>
</comment>
<comment type="similarity">
    <text evidence="1">Belongs to the Fmt family.</text>
</comment>
<protein>
    <recommendedName>
        <fullName evidence="1">Methionyl-tRNA formyltransferase</fullName>
        <ecNumber evidence="1">2.1.2.9</ecNumber>
    </recommendedName>
</protein>
<dbReference type="EC" id="2.1.2.9" evidence="1"/>
<dbReference type="EMBL" id="CP000920">
    <property type="protein sequence ID" value="ACO20559.1"/>
    <property type="molecule type" value="Genomic_DNA"/>
</dbReference>
<dbReference type="RefSeq" id="WP_000163707.1">
    <property type="nucleotide sequence ID" value="NC_012467.1"/>
</dbReference>
<dbReference type="SMR" id="C1CM71"/>
<dbReference type="KEGG" id="spp:SPP_1753"/>
<dbReference type="HOGENOM" id="CLU_033347_1_1_9"/>
<dbReference type="GO" id="GO:0005829">
    <property type="term" value="C:cytosol"/>
    <property type="evidence" value="ECO:0007669"/>
    <property type="project" value="TreeGrafter"/>
</dbReference>
<dbReference type="GO" id="GO:0004479">
    <property type="term" value="F:methionyl-tRNA formyltransferase activity"/>
    <property type="evidence" value="ECO:0007669"/>
    <property type="project" value="UniProtKB-UniRule"/>
</dbReference>
<dbReference type="CDD" id="cd08646">
    <property type="entry name" value="FMT_core_Met-tRNA-FMT_N"/>
    <property type="match status" value="1"/>
</dbReference>
<dbReference type="CDD" id="cd08704">
    <property type="entry name" value="Met_tRNA_FMT_C"/>
    <property type="match status" value="1"/>
</dbReference>
<dbReference type="FunFam" id="3.10.25.10:FF:000004">
    <property type="entry name" value="Methionyl-tRNA formyltransferase"/>
    <property type="match status" value="1"/>
</dbReference>
<dbReference type="FunFam" id="3.40.50.170:FF:000004">
    <property type="entry name" value="Methionyl-tRNA formyltransferase"/>
    <property type="match status" value="1"/>
</dbReference>
<dbReference type="Gene3D" id="3.10.25.10">
    <property type="entry name" value="Formyl transferase, C-terminal domain"/>
    <property type="match status" value="1"/>
</dbReference>
<dbReference type="Gene3D" id="3.40.50.170">
    <property type="entry name" value="Formyl transferase, N-terminal domain"/>
    <property type="match status" value="1"/>
</dbReference>
<dbReference type="HAMAP" id="MF_00182">
    <property type="entry name" value="Formyl_trans"/>
    <property type="match status" value="1"/>
</dbReference>
<dbReference type="InterPro" id="IPR005794">
    <property type="entry name" value="Fmt"/>
</dbReference>
<dbReference type="InterPro" id="IPR005793">
    <property type="entry name" value="Formyl_trans_C"/>
</dbReference>
<dbReference type="InterPro" id="IPR037022">
    <property type="entry name" value="Formyl_trans_C_sf"/>
</dbReference>
<dbReference type="InterPro" id="IPR002376">
    <property type="entry name" value="Formyl_transf_N"/>
</dbReference>
<dbReference type="InterPro" id="IPR036477">
    <property type="entry name" value="Formyl_transf_N_sf"/>
</dbReference>
<dbReference type="InterPro" id="IPR011034">
    <property type="entry name" value="Formyl_transferase-like_C_sf"/>
</dbReference>
<dbReference type="InterPro" id="IPR001555">
    <property type="entry name" value="GART_AS"/>
</dbReference>
<dbReference type="InterPro" id="IPR044135">
    <property type="entry name" value="Met-tRNA-FMT_C"/>
</dbReference>
<dbReference type="InterPro" id="IPR041711">
    <property type="entry name" value="Met-tRNA-FMT_N"/>
</dbReference>
<dbReference type="NCBIfam" id="TIGR00460">
    <property type="entry name" value="fmt"/>
    <property type="match status" value="1"/>
</dbReference>
<dbReference type="PANTHER" id="PTHR11138">
    <property type="entry name" value="METHIONYL-TRNA FORMYLTRANSFERASE"/>
    <property type="match status" value="1"/>
</dbReference>
<dbReference type="PANTHER" id="PTHR11138:SF5">
    <property type="entry name" value="METHIONYL-TRNA FORMYLTRANSFERASE, MITOCHONDRIAL"/>
    <property type="match status" value="1"/>
</dbReference>
<dbReference type="Pfam" id="PF02911">
    <property type="entry name" value="Formyl_trans_C"/>
    <property type="match status" value="1"/>
</dbReference>
<dbReference type="Pfam" id="PF00551">
    <property type="entry name" value="Formyl_trans_N"/>
    <property type="match status" value="1"/>
</dbReference>
<dbReference type="SUPFAM" id="SSF50486">
    <property type="entry name" value="FMT C-terminal domain-like"/>
    <property type="match status" value="1"/>
</dbReference>
<dbReference type="SUPFAM" id="SSF53328">
    <property type="entry name" value="Formyltransferase"/>
    <property type="match status" value="1"/>
</dbReference>
<dbReference type="PROSITE" id="PS00373">
    <property type="entry name" value="GART"/>
    <property type="match status" value="1"/>
</dbReference>
<reference key="1">
    <citation type="journal article" date="2010" name="Genome Biol.">
        <title>Structure and dynamics of the pan-genome of Streptococcus pneumoniae and closely related species.</title>
        <authorList>
            <person name="Donati C."/>
            <person name="Hiller N.L."/>
            <person name="Tettelin H."/>
            <person name="Muzzi A."/>
            <person name="Croucher N.J."/>
            <person name="Angiuoli S.V."/>
            <person name="Oggioni M."/>
            <person name="Dunning Hotopp J.C."/>
            <person name="Hu F.Z."/>
            <person name="Riley D.R."/>
            <person name="Covacci A."/>
            <person name="Mitchell T.J."/>
            <person name="Bentley S.D."/>
            <person name="Kilian M."/>
            <person name="Ehrlich G.D."/>
            <person name="Rappuoli R."/>
            <person name="Moxon E.R."/>
            <person name="Masignani V."/>
        </authorList>
    </citation>
    <scope>NUCLEOTIDE SEQUENCE [LARGE SCALE GENOMIC DNA]</scope>
    <source>
        <strain>P1031</strain>
    </source>
</reference>
<evidence type="ECO:0000255" key="1">
    <source>
        <dbReference type="HAMAP-Rule" id="MF_00182"/>
    </source>
</evidence>
<name>FMT_STRZP</name>